<organism>
    <name type="scientific">Agrobacterium fabrum (strain C58 / ATCC 33970)</name>
    <name type="common">Agrobacterium tumefaciens (strain C58)</name>
    <dbReference type="NCBI Taxonomy" id="176299"/>
    <lineage>
        <taxon>Bacteria</taxon>
        <taxon>Pseudomonadati</taxon>
        <taxon>Pseudomonadota</taxon>
        <taxon>Alphaproteobacteria</taxon>
        <taxon>Hyphomicrobiales</taxon>
        <taxon>Rhizobiaceae</taxon>
        <taxon>Rhizobium/Agrobacterium group</taxon>
        <taxon>Agrobacterium</taxon>
        <taxon>Agrobacterium tumefaciens complex</taxon>
    </lineage>
</organism>
<proteinExistence type="inferred from homology"/>
<reference key="1">
    <citation type="journal article" date="2001" name="Science">
        <title>The genome of the natural genetic engineer Agrobacterium tumefaciens C58.</title>
        <authorList>
            <person name="Wood D.W."/>
            <person name="Setubal J.C."/>
            <person name="Kaul R."/>
            <person name="Monks D.E."/>
            <person name="Kitajima J.P."/>
            <person name="Okura V.K."/>
            <person name="Zhou Y."/>
            <person name="Chen L."/>
            <person name="Wood G.E."/>
            <person name="Almeida N.F. Jr."/>
            <person name="Woo L."/>
            <person name="Chen Y."/>
            <person name="Paulsen I.T."/>
            <person name="Eisen J.A."/>
            <person name="Karp P.D."/>
            <person name="Bovee D. Sr."/>
            <person name="Chapman P."/>
            <person name="Clendenning J."/>
            <person name="Deatherage G."/>
            <person name="Gillet W."/>
            <person name="Grant C."/>
            <person name="Kutyavin T."/>
            <person name="Levy R."/>
            <person name="Li M.-J."/>
            <person name="McClelland E."/>
            <person name="Palmieri A."/>
            <person name="Raymond C."/>
            <person name="Rouse G."/>
            <person name="Saenphimmachak C."/>
            <person name="Wu Z."/>
            <person name="Romero P."/>
            <person name="Gordon D."/>
            <person name="Zhang S."/>
            <person name="Yoo H."/>
            <person name="Tao Y."/>
            <person name="Biddle P."/>
            <person name="Jung M."/>
            <person name="Krespan W."/>
            <person name="Perry M."/>
            <person name="Gordon-Kamm B."/>
            <person name="Liao L."/>
            <person name="Kim S."/>
            <person name="Hendrick C."/>
            <person name="Zhao Z.-Y."/>
            <person name="Dolan M."/>
            <person name="Chumley F."/>
            <person name="Tingey S.V."/>
            <person name="Tomb J.-F."/>
            <person name="Gordon M.P."/>
            <person name="Olson M.V."/>
            <person name="Nester E.W."/>
        </authorList>
    </citation>
    <scope>NUCLEOTIDE SEQUENCE [LARGE SCALE GENOMIC DNA]</scope>
    <source>
        <strain>C58 / ATCC 33970</strain>
    </source>
</reference>
<reference key="2">
    <citation type="journal article" date="2001" name="Science">
        <title>Genome sequence of the plant pathogen and biotechnology agent Agrobacterium tumefaciens C58.</title>
        <authorList>
            <person name="Goodner B."/>
            <person name="Hinkle G."/>
            <person name="Gattung S."/>
            <person name="Miller N."/>
            <person name="Blanchard M."/>
            <person name="Qurollo B."/>
            <person name="Goldman B.S."/>
            <person name="Cao Y."/>
            <person name="Askenazi M."/>
            <person name="Halling C."/>
            <person name="Mullin L."/>
            <person name="Houmiel K."/>
            <person name="Gordon J."/>
            <person name="Vaudin M."/>
            <person name="Iartchouk O."/>
            <person name="Epp A."/>
            <person name="Liu F."/>
            <person name="Wollam C."/>
            <person name="Allinger M."/>
            <person name="Doughty D."/>
            <person name="Scott C."/>
            <person name="Lappas C."/>
            <person name="Markelz B."/>
            <person name="Flanagan C."/>
            <person name="Crowell C."/>
            <person name="Gurson J."/>
            <person name="Lomo C."/>
            <person name="Sear C."/>
            <person name="Strub G."/>
            <person name="Cielo C."/>
            <person name="Slater S."/>
        </authorList>
    </citation>
    <scope>NUCLEOTIDE SEQUENCE [LARGE SCALE GENOMIC DNA]</scope>
    <source>
        <strain>C58 / ATCC 33970</strain>
    </source>
</reference>
<gene>
    <name evidence="1" type="primary">rpmG</name>
    <name type="ordered locus">Atu1299</name>
    <name type="ORF">AGR_C_2389</name>
</gene>
<protein>
    <recommendedName>
        <fullName evidence="1">Large ribosomal subunit protein bL33</fullName>
    </recommendedName>
    <alternativeName>
        <fullName evidence="2">50S ribosomal protein L33</fullName>
    </alternativeName>
</protein>
<accession>Q8UFU8</accession>
<keyword id="KW-1185">Reference proteome</keyword>
<keyword id="KW-0687">Ribonucleoprotein</keyword>
<keyword id="KW-0689">Ribosomal protein</keyword>
<dbReference type="EMBL" id="AE007869">
    <property type="protein sequence ID" value="AAL42305.1"/>
    <property type="molecule type" value="Genomic_DNA"/>
</dbReference>
<dbReference type="PIR" id="AC2736">
    <property type="entry name" value="AC2736"/>
</dbReference>
<dbReference type="RefSeq" id="NP_529204.1">
    <property type="nucleotide sequence ID" value="NC_003062.2"/>
</dbReference>
<dbReference type="RefSeq" id="WP_003496403.1">
    <property type="nucleotide sequence ID" value="NC_003062.2"/>
</dbReference>
<dbReference type="SMR" id="Q8UFU8"/>
<dbReference type="STRING" id="176299.Atu1299"/>
<dbReference type="EnsemblBacteria" id="AAL42305">
    <property type="protein sequence ID" value="AAL42305"/>
    <property type="gene ID" value="Atu1299"/>
</dbReference>
<dbReference type="GeneID" id="97364094"/>
<dbReference type="KEGG" id="atu:Atu1299"/>
<dbReference type="PATRIC" id="fig|176299.10.peg.1313"/>
<dbReference type="eggNOG" id="COG0267">
    <property type="taxonomic scope" value="Bacteria"/>
</dbReference>
<dbReference type="HOGENOM" id="CLU_190949_1_1_5"/>
<dbReference type="OrthoDB" id="21586at2"/>
<dbReference type="PhylomeDB" id="Q8UFU8"/>
<dbReference type="BioCyc" id="AGRO:ATU1299-MONOMER"/>
<dbReference type="PRO" id="PR:Q8UFU8"/>
<dbReference type="Proteomes" id="UP000000813">
    <property type="component" value="Chromosome circular"/>
</dbReference>
<dbReference type="GO" id="GO:0022625">
    <property type="term" value="C:cytosolic large ribosomal subunit"/>
    <property type="evidence" value="ECO:0007669"/>
    <property type="project" value="TreeGrafter"/>
</dbReference>
<dbReference type="GO" id="GO:0003735">
    <property type="term" value="F:structural constituent of ribosome"/>
    <property type="evidence" value="ECO:0007669"/>
    <property type="project" value="InterPro"/>
</dbReference>
<dbReference type="GO" id="GO:0006412">
    <property type="term" value="P:translation"/>
    <property type="evidence" value="ECO:0007669"/>
    <property type="project" value="UniProtKB-UniRule"/>
</dbReference>
<dbReference type="Gene3D" id="2.20.28.120">
    <property type="entry name" value="Ribosomal protein L33"/>
    <property type="match status" value="1"/>
</dbReference>
<dbReference type="HAMAP" id="MF_00294">
    <property type="entry name" value="Ribosomal_bL33"/>
    <property type="match status" value="1"/>
</dbReference>
<dbReference type="InterPro" id="IPR001705">
    <property type="entry name" value="Ribosomal_bL33"/>
</dbReference>
<dbReference type="InterPro" id="IPR018264">
    <property type="entry name" value="Ribosomal_bL33_CS"/>
</dbReference>
<dbReference type="InterPro" id="IPR038584">
    <property type="entry name" value="Ribosomal_bL33_sf"/>
</dbReference>
<dbReference type="InterPro" id="IPR011332">
    <property type="entry name" value="Ribosomal_zn-bd"/>
</dbReference>
<dbReference type="NCBIfam" id="NF001860">
    <property type="entry name" value="PRK00595.1"/>
    <property type="match status" value="1"/>
</dbReference>
<dbReference type="NCBIfam" id="TIGR01023">
    <property type="entry name" value="rpmG_bact"/>
    <property type="match status" value="1"/>
</dbReference>
<dbReference type="PANTHER" id="PTHR15238">
    <property type="entry name" value="54S RIBOSOMAL PROTEIN L39, MITOCHONDRIAL"/>
    <property type="match status" value="1"/>
</dbReference>
<dbReference type="PANTHER" id="PTHR15238:SF1">
    <property type="entry name" value="LARGE RIBOSOMAL SUBUNIT PROTEIN BL33M"/>
    <property type="match status" value="1"/>
</dbReference>
<dbReference type="Pfam" id="PF00471">
    <property type="entry name" value="Ribosomal_L33"/>
    <property type="match status" value="1"/>
</dbReference>
<dbReference type="SUPFAM" id="SSF57829">
    <property type="entry name" value="Zn-binding ribosomal proteins"/>
    <property type="match status" value="1"/>
</dbReference>
<dbReference type="PROSITE" id="PS00582">
    <property type="entry name" value="RIBOSOMAL_L33"/>
    <property type="match status" value="1"/>
</dbReference>
<name>RL33_AGRFC</name>
<sequence length="55" mass="6342">MAKATTIKIKLLSTADTGTFYVTTKNSRTFTDKMTKTKYDPVVRKHVEFKETKIK</sequence>
<comment type="similarity">
    <text evidence="1">Belongs to the bacterial ribosomal protein bL33 family.</text>
</comment>
<evidence type="ECO:0000255" key="1">
    <source>
        <dbReference type="HAMAP-Rule" id="MF_00294"/>
    </source>
</evidence>
<evidence type="ECO:0000305" key="2"/>
<feature type="chain" id="PRO_0000170133" description="Large ribosomal subunit protein bL33">
    <location>
        <begin position="1"/>
        <end position="55"/>
    </location>
</feature>